<comment type="subcellular location">
    <subcellularLocation>
        <location evidence="3">Membrane</location>
        <topology evidence="3">Multi-pass membrane protein</topology>
    </subcellularLocation>
</comment>
<comment type="sequence caution" evidence="3">
    <conflict type="erroneous gene model prediction">
        <sequence resource="EMBL-CDS" id="AAF81310"/>
    </conflict>
    <text>The predicted gene At1g01510 has been split into 3 genes: At1g01500, At1g01510 and At1g01520.</text>
</comment>
<comment type="sequence caution" evidence="3">
    <conflict type="erroneous gene model prediction">
        <sequence resource="EMBL-CDS" id="CAA73308"/>
    </conflict>
</comment>
<comment type="sequence caution" evidence="3">
    <conflict type="erroneous initiation">
        <sequence resource="EMBL-CDS" id="CAA73308"/>
    </conflict>
    <text>Truncated N-terminus.</text>
</comment>
<evidence type="ECO:0000255" key="1"/>
<evidence type="ECO:0000256" key="2">
    <source>
        <dbReference type="SAM" id="MobiDB-lite"/>
    </source>
</evidence>
<evidence type="ECO:0000305" key="3"/>
<protein>
    <recommendedName>
        <fullName>Uncharacterized protein At1g01500</fullName>
    </recommendedName>
</protein>
<reference key="1">
    <citation type="journal article" date="1998" name="Gene">
        <title>Sequence analysis of a 40-kb Arabidopsis thaliana genomic region located at the top of chromosome 1.</title>
        <authorList>
            <person name="Terryn N."/>
            <person name="Gielen J."/>
            <person name="De Keyser A."/>
            <person name="Van Den Daele H."/>
            <person name="Ardiles W."/>
            <person name="Neyt P."/>
            <person name="De Clercq R."/>
            <person name="Coppieters J."/>
            <person name="Dehais P."/>
            <person name="Villarroel R."/>
            <person name="Rouze P."/>
            <person name="van Montagu M."/>
        </authorList>
    </citation>
    <scope>NUCLEOTIDE SEQUENCE [GENOMIC DNA]</scope>
    <scope>NUCLEOTIDE SEQUENCE [MRNA] OF 43-319</scope>
    <source>
        <strain>cv. Columbia</strain>
    </source>
</reference>
<reference key="2">
    <citation type="journal article" date="2000" name="Nature">
        <title>Sequence and analysis of chromosome 1 of the plant Arabidopsis thaliana.</title>
        <authorList>
            <person name="Theologis A."/>
            <person name="Ecker J.R."/>
            <person name="Palm C.J."/>
            <person name="Federspiel N.A."/>
            <person name="Kaul S."/>
            <person name="White O."/>
            <person name="Alonso J."/>
            <person name="Altafi H."/>
            <person name="Araujo R."/>
            <person name="Bowman C.L."/>
            <person name="Brooks S.Y."/>
            <person name="Buehler E."/>
            <person name="Chan A."/>
            <person name="Chao Q."/>
            <person name="Chen H."/>
            <person name="Cheuk R.F."/>
            <person name="Chin C.W."/>
            <person name="Chung M.K."/>
            <person name="Conn L."/>
            <person name="Conway A.B."/>
            <person name="Conway A.R."/>
            <person name="Creasy T.H."/>
            <person name="Dewar K."/>
            <person name="Dunn P."/>
            <person name="Etgu P."/>
            <person name="Feldblyum T.V."/>
            <person name="Feng J.-D."/>
            <person name="Fong B."/>
            <person name="Fujii C.Y."/>
            <person name="Gill J.E."/>
            <person name="Goldsmith A.D."/>
            <person name="Haas B."/>
            <person name="Hansen N.F."/>
            <person name="Hughes B."/>
            <person name="Huizar L."/>
            <person name="Hunter J.L."/>
            <person name="Jenkins J."/>
            <person name="Johnson-Hopson C."/>
            <person name="Khan S."/>
            <person name="Khaykin E."/>
            <person name="Kim C.J."/>
            <person name="Koo H.L."/>
            <person name="Kremenetskaia I."/>
            <person name="Kurtz D.B."/>
            <person name="Kwan A."/>
            <person name="Lam B."/>
            <person name="Langin-Hooper S."/>
            <person name="Lee A."/>
            <person name="Lee J.M."/>
            <person name="Lenz C.A."/>
            <person name="Li J.H."/>
            <person name="Li Y.-P."/>
            <person name="Lin X."/>
            <person name="Liu S.X."/>
            <person name="Liu Z.A."/>
            <person name="Luros J.S."/>
            <person name="Maiti R."/>
            <person name="Marziali A."/>
            <person name="Militscher J."/>
            <person name="Miranda M."/>
            <person name="Nguyen M."/>
            <person name="Nierman W.C."/>
            <person name="Osborne B.I."/>
            <person name="Pai G."/>
            <person name="Peterson J."/>
            <person name="Pham P.K."/>
            <person name="Rizzo M."/>
            <person name="Rooney T."/>
            <person name="Rowley D."/>
            <person name="Sakano H."/>
            <person name="Salzberg S.L."/>
            <person name="Schwartz J.R."/>
            <person name="Shinn P."/>
            <person name="Southwick A.M."/>
            <person name="Sun H."/>
            <person name="Tallon L.J."/>
            <person name="Tambunga G."/>
            <person name="Toriumi M.J."/>
            <person name="Town C.D."/>
            <person name="Utterback T."/>
            <person name="Van Aken S."/>
            <person name="Vaysberg M."/>
            <person name="Vysotskaia V.S."/>
            <person name="Walker M."/>
            <person name="Wu D."/>
            <person name="Yu G."/>
            <person name="Fraser C.M."/>
            <person name="Venter J.C."/>
            <person name="Davis R.W."/>
        </authorList>
    </citation>
    <scope>NUCLEOTIDE SEQUENCE [LARGE SCALE GENOMIC DNA]</scope>
    <source>
        <strain>cv. Columbia</strain>
    </source>
</reference>
<reference key="3">
    <citation type="journal article" date="2017" name="Plant J.">
        <title>Araport11: a complete reannotation of the Arabidopsis thaliana reference genome.</title>
        <authorList>
            <person name="Cheng C.Y."/>
            <person name="Krishnakumar V."/>
            <person name="Chan A.P."/>
            <person name="Thibaud-Nissen F."/>
            <person name="Schobel S."/>
            <person name="Town C.D."/>
        </authorList>
    </citation>
    <scope>GENOME REANNOTATION</scope>
    <source>
        <strain>cv. Columbia</strain>
    </source>
</reference>
<reference key="4">
    <citation type="journal article" date="2003" name="Science">
        <title>Empirical analysis of transcriptional activity in the Arabidopsis genome.</title>
        <authorList>
            <person name="Yamada K."/>
            <person name="Lim J."/>
            <person name="Dale J.M."/>
            <person name="Chen H."/>
            <person name="Shinn P."/>
            <person name="Palm C.J."/>
            <person name="Southwick A.M."/>
            <person name="Wu H.C."/>
            <person name="Kim C.J."/>
            <person name="Nguyen M."/>
            <person name="Pham P.K."/>
            <person name="Cheuk R.F."/>
            <person name="Karlin-Newmann G."/>
            <person name="Liu S.X."/>
            <person name="Lam B."/>
            <person name="Sakano H."/>
            <person name="Wu T."/>
            <person name="Yu G."/>
            <person name="Miranda M."/>
            <person name="Quach H.L."/>
            <person name="Tripp M."/>
            <person name="Chang C.H."/>
            <person name="Lee J.M."/>
            <person name="Toriumi M.J."/>
            <person name="Chan M.M."/>
            <person name="Tang C.C."/>
            <person name="Onodera C.S."/>
            <person name="Deng J.M."/>
            <person name="Akiyama K."/>
            <person name="Ansari Y."/>
            <person name="Arakawa T."/>
            <person name="Banh J."/>
            <person name="Banno F."/>
            <person name="Bowser L."/>
            <person name="Brooks S.Y."/>
            <person name="Carninci P."/>
            <person name="Chao Q."/>
            <person name="Choy N."/>
            <person name="Enju A."/>
            <person name="Goldsmith A.D."/>
            <person name="Gurjal M."/>
            <person name="Hansen N.F."/>
            <person name="Hayashizaki Y."/>
            <person name="Johnson-Hopson C."/>
            <person name="Hsuan V.W."/>
            <person name="Iida K."/>
            <person name="Karnes M."/>
            <person name="Khan S."/>
            <person name="Koesema E."/>
            <person name="Ishida J."/>
            <person name="Jiang P.X."/>
            <person name="Jones T."/>
            <person name="Kawai J."/>
            <person name="Kamiya A."/>
            <person name="Meyers C."/>
            <person name="Nakajima M."/>
            <person name="Narusaka M."/>
            <person name="Seki M."/>
            <person name="Sakurai T."/>
            <person name="Satou M."/>
            <person name="Tamse R."/>
            <person name="Vaysberg M."/>
            <person name="Wallender E.K."/>
            <person name="Wong C."/>
            <person name="Yamamura Y."/>
            <person name="Yuan S."/>
            <person name="Shinozaki K."/>
            <person name="Davis R.W."/>
            <person name="Theologis A."/>
            <person name="Ecker J.R."/>
        </authorList>
    </citation>
    <scope>NUCLEOTIDE SEQUENCE [LARGE SCALE MRNA]</scope>
    <source>
        <strain>cv. Columbia</strain>
    </source>
</reference>
<reference key="5">
    <citation type="submission" date="2006-07" db="EMBL/GenBank/DDBJ databases">
        <title>Large-scale analysis of RIKEN Arabidopsis full-length (RAFL) cDNAs.</title>
        <authorList>
            <person name="Totoki Y."/>
            <person name="Seki M."/>
            <person name="Ishida J."/>
            <person name="Nakajima M."/>
            <person name="Enju A."/>
            <person name="Kamiya A."/>
            <person name="Narusaka M."/>
            <person name="Shin-i T."/>
            <person name="Nakagawa M."/>
            <person name="Sakamoto N."/>
            <person name="Oishi K."/>
            <person name="Kohara Y."/>
            <person name="Kobayashi M."/>
            <person name="Toyoda A."/>
            <person name="Sakaki Y."/>
            <person name="Sakurai T."/>
            <person name="Iida K."/>
            <person name="Akiyama K."/>
            <person name="Satou M."/>
            <person name="Toyoda T."/>
            <person name="Konagaya A."/>
            <person name="Carninci P."/>
            <person name="Kawai J."/>
            <person name="Hayashizaki Y."/>
            <person name="Shinozaki K."/>
        </authorList>
    </citation>
    <scope>NUCLEOTIDE SEQUENCE [LARGE SCALE MRNA]</scope>
    <source>
        <strain>cv. Columbia</strain>
    </source>
</reference>
<reference key="6">
    <citation type="submission" date="2002-03" db="EMBL/GenBank/DDBJ databases">
        <title>Full-length cDNA from Arabidopsis thaliana.</title>
        <authorList>
            <person name="Brover V.V."/>
            <person name="Troukhan M.E."/>
            <person name="Alexandrov N.A."/>
            <person name="Lu Y.-P."/>
            <person name="Flavell R.B."/>
            <person name="Feldmann K.A."/>
        </authorList>
    </citation>
    <scope>NUCLEOTIDE SEQUENCE [LARGE SCALE MRNA]</scope>
</reference>
<proteinExistence type="evidence at transcript level"/>
<keyword id="KW-0472">Membrane</keyword>
<keyword id="KW-1185">Reference proteome</keyword>
<keyword id="KW-0812">Transmembrane</keyword>
<keyword id="KW-1133">Transmembrane helix</keyword>
<organism>
    <name type="scientific">Arabidopsis thaliana</name>
    <name type="common">Mouse-ear cress</name>
    <dbReference type="NCBI Taxonomy" id="3702"/>
    <lineage>
        <taxon>Eukaryota</taxon>
        <taxon>Viridiplantae</taxon>
        <taxon>Streptophyta</taxon>
        <taxon>Embryophyta</taxon>
        <taxon>Tracheophyta</taxon>
        <taxon>Spermatophyta</taxon>
        <taxon>Magnoliopsida</taxon>
        <taxon>eudicotyledons</taxon>
        <taxon>Gunneridae</taxon>
        <taxon>Pentapetalae</taxon>
        <taxon>rosids</taxon>
        <taxon>malvids</taxon>
        <taxon>Brassicales</taxon>
        <taxon>Brassicaceae</taxon>
        <taxon>Camelineae</taxon>
        <taxon>Arabidopsis</taxon>
    </lineage>
</organism>
<gene>
    <name type="ordered locus">At1g01500</name>
    <name type="ORF">F22L4.17</name>
</gene>
<dbReference type="EMBL" id="Y10087">
    <property type="protein sequence ID" value="CAA71176.1"/>
    <property type="molecule type" value="mRNA"/>
</dbReference>
<dbReference type="EMBL" id="Y12776">
    <property type="protein sequence ID" value="CAA73308.1"/>
    <property type="status" value="ALT_SEQ"/>
    <property type="molecule type" value="Genomic_DNA"/>
</dbReference>
<dbReference type="EMBL" id="AC061957">
    <property type="protein sequence ID" value="AAF81310.1"/>
    <property type="status" value="ALT_SEQ"/>
    <property type="molecule type" value="Genomic_DNA"/>
</dbReference>
<dbReference type="EMBL" id="CP002684">
    <property type="protein sequence ID" value="AEE27297.1"/>
    <property type="molecule type" value="Genomic_DNA"/>
</dbReference>
<dbReference type="EMBL" id="BT002511">
    <property type="protein sequence ID" value="AAO00871.1"/>
    <property type="molecule type" value="mRNA"/>
</dbReference>
<dbReference type="EMBL" id="BT008724">
    <property type="protein sequence ID" value="AAP42737.1"/>
    <property type="molecule type" value="mRNA"/>
</dbReference>
<dbReference type="EMBL" id="AK227140">
    <property type="protein sequence ID" value="BAE99186.1"/>
    <property type="molecule type" value="mRNA"/>
</dbReference>
<dbReference type="EMBL" id="AY088357">
    <property type="protein sequence ID" value="AAM65896.1"/>
    <property type="molecule type" value="mRNA"/>
</dbReference>
<dbReference type="RefSeq" id="NP_563628.1">
    <property type="nucleotide sequence ID" value="NM_100032.4"/>
</dbReference>
<dbReference type="BioGRID" id="24665">
    <property type="interactions" value="1"/>
</dbReference>
<dbReference type="FunCoup" id="Q8GUH2">
    <property type="interactions" value="47"/>
</dbReference>
<dbReference type="IntAct" id="Q8GUH2">
    <property type="interactions" value="1"/>
</dbReference>
<dbReference type="STRING" id="3702.Q8GUH2"/>
<dbReference type="iPTMnet" id="Q8GUH2"/>
<dbReference type="PaxDb" id="3702-AT1G01500.1"/>
<dbReference type="ProteomicsDB" id="242561"/>
<dbReference type="EnsemblPlants" id="AT1G01500.1">
    <property type="protein sequence ID" value="AT1G01500.1"/>
    <property type="gene ID" value="AT1G01500"/>
</dbReference>
<dbReference type="GeneID" id="839430"/>
<dbReference type="Gramene" id="AT1G01500.1">
    <property type="protein sequence ID" value="AT1G01500.1"/>
    <property type="gene ID" value="AT1G01500"/>
</dbReference>
<dbReference type="KEGG" id="ath:AT1G01500"/>
<dbReference type="Araport" id="AT1G01500"/>
<dbReference type="TAIR" id="AT1G01500"/>
<dbReference type="eggNOG" id="ENOG502QRIR">
    <property type="taxonomic scope" value="Eukaryota"/>
</dbReference>
<dbReference type="HOGENOM" id="CLU_080009_0_0_1"/>
<dbReference type="InParanoid" id="Q8GUH2"/>
<dbReference type="OMA" id="DMYTGED"/>
<dbReference type="PhylomeDB" id="Q8GUH2"/>
<dbReference type="PRO" id="PR:Q8GUH2"/>
<dbReference type="Proteomes" id="UP000006548">
    <property type="component" value="Chromosome 1"/>
</dbReference>
<dbReference type="ExpressionAtlas" id="Q8GUH2">
    <property type="expression patterns" value="baseline and differential"/>
</dbReference>
<dbReference type="GO" id="GO:0016020">
    <property type="term" value="C:membrane"/>
    <property type="evidence" value="ECO:0007669"/>
    <property type="project" value="UniProtKB-SubCell"/>
</dbReference>
<dbReference type="PANTHER" id="PTHR37244">
    <property type="entry name" value="NADP-SPECIFIC GLUTAMATE DEHYDROGENASE"/>
    <property type="match status" value="1"/>
</dbReference>
<dbReference type="PANTHER" id="PTHR37244:SF1">
    <property type="entry name" value="NADP-SPECIFIC GLUTAMATE DEHYDROGENASE"/>
    <property type="match status" value="1"/>
</dbReference>
<accession>Q8GUH2</accession>
<accession>O03988</accession>
<accession>O23703</accession>
<accession>Q8L9M0</accession>
<accession>Q9LMM9</accession>
<feature type="chain" id="PRO_0000408480" description="Uncharacterized protein At1g01500">
    <location>
        <begin position="1"/>
        <end position="327"/>
    </location>
</feature>
<feature type="transmembrane region" description="Helical" evidence="1">
    <location>
        <begin position="183"/>
        <end position="203"/>
    </location>
</feature>
<feature type="transmembrane region" description="Helical" evidence="1">
    <location>
        <begin position="292"/>
        <end position="312"/>
    </location>
</feature>
<feature type="region of interest" description="Disordered" evidence="2">
    <location>
        <begin position="12"/>
        <end position="31"/>
    </location>
</feature>
<feature type="sequence conflict" description="In Ref. 6; AAM65896." evidence="3" ref="6">
    <original>V</original>
    <variation>A</variation>
    <location>
        <position position="175"/>
    </location>
</feature>
<name>Y1015_ARATH</name>
<sequence length="327" mass="35926">MISKDHLHHLDPLGTTKSYHMNTSTVSPPSPASSISLSQSAWLEVRLFYVRIAPCVVENVPDFLTLRHPRRETGASLEVNGVRVPSSQTASLKLRRDRVDRESSEVTYVSTETVRVTGCVDFEVYDNEDMVLCGNLDRIEGAWNNGTVSDPKTGWGMDCYIAMGNGHVSGPSASVFFQPKFGVSSPSVEVYIAGCCGGVPVILTKTIQASPRRKVARHVTLDAIPEDEEVGKEQDIGTIGDELARQSKVQMMESEVDEYDDSDMKMAQRYYPEGMYVDEDGQLSWFNAGVRVGVGIGLGMCLGVGIGVGLLMRSYQATTSNLRRRFL</sequence>